<sequence>MSEYSLFTSESVSEGHPDKIADQISDAVLDAIIAEDKYARVACETLVKTGVAIIAGEVSTSAWVDLEDIVRNVILDIGYNSSDVGFDGATCGVMNIIGKQSVDIAQGVDRSKPEDQGAGDQGLMFGYASNETDVLMPAPITFSHQLVQRQAEARKSGLLPWLRPDAKSQVTCRYENGKVVGVDAIVLSTQHNPDVSYKDLREGVMELIVKHVIPAHLLHKDTQFHINPTGNFIIGGPVGDCGLTGRKIIVDTYGGMARHGGGAFSGKDPSKVDRSAAYAGRYVAKNIVAAGLAERCEIQVSYAIGVAQPTSISLNTFGTGKLSDDKIIKLVRDNFDLRPYAITTMLDLLHPMYQATAAYGHFGRIPVEMTVGDDTFTAFTWEKTDRADALRAAAGL</sequence>
<feature type="chain" id="PRO_0000241021" description="S-adenosylmethionine synthase">
    <location>
        <begin position="1"/>
        <end position="396"/>
    </location>
</feature>
<feature type="region of interest" description="Flexible loop" evidence="1">
    <location>
        <begin position="100"/>
        <end position="110"/>
    </location>
</feature>
<feature type="binding site" description="in other chain" evidence="1">
    <location>
        <position position="16"/>
    </location>
    <ligand>
        <name>ATP</name>
        <dbReference type="ChEBI" id="CHEBI:30616"/>
        <note>ligand shared between two neighboring subunits</note>
    </ligand>
</feature>
<feature type="binding site" evidence="1">
    <location>
        <position position="18"/>
    </location>
    <ligand>
        <name>Mg(2+)</name>
        <dbReference type="ChEBI" id="CHEBI:18420"/>
    </ligand>
</feature>
<feature type="binding site" evidence="1">
    <location>
        <position position="44"/>
    </location>
    <ligand>
        <name>K(+)</name>
        <dbReference type="ChEBI" id="CHEBI:29103"/>
    </ligand>
</feature>
<feature type="binding site" description="in other chain" evidence="1">
    <location>
        <position position="57"/>
    </location>
    <ligand>
        <name>L-methionine</name>
        <dbReference type="ChEBI" id="CHEBI:57844"/>
        <note>ligand shared between two neighboring subunits</note>
    </ligand>
</feature>
<feature type="binding site" description="in other chain" evidence="1">
    <location>
        <position position="100"/>
    </location>
    <ligand>
        <name>L-methionine</name>
        <dbReference type="ChEBI" id="CHEBI:57844"/>
        <note>ligand shared between two neighboring subunits</note>
    </ligand>
</feature>
<feature type="binding site" description="in other chain" evidence="1">
    <location>
        <begin position="165"/>
        <end position="167"/>
    </location>
    <ligand>
        <name>ATP</name>
        <dbReference type="ChEBI" id="CHEBI:30616"/>
        <note>ligand shared between two neighboring subunits</note>
    </ligand>
</feature>
<feature type="binding site" evidence="1">
    <location>
        <position position="240"/>
    </location>
    <ligand>
        <name>ATP</name>
        <dbReference type="ChEBI" id="CHEBI:30616"/>
        <note>ligand shared between two neighboring subunits</note>
    </ligand>
</feature>
<feature type="binding site" evidence="1">
    <location>
        <position position="240"/>
    </location>
    <ligand>
        <name>L-methionine</name>
        <dbReference type="ChEBI" id="CHEBI:57844"/>
        <note>ligand shared between two neighboring subunits</note>
    </ligand>
</feature>
<feature type="binding site" description="in other chain" evidence="1">
    <location>
        <begin position="246"/>
        <end position="247"/>
    </location>
    <ligand>
        <name>ATP</name>
        <dbReference type="ChEBI" id="CHEBI:30616"/>
        <note>ligand shared between two neighboring subunits</note>
    </ligand>
</feature>
<feature type="binding site" evidence="1">
    <location>
        <position position="263"/>
    </location>
    <ligand>
        <name>ATP</name>
        <dbReference type="ChEBI" id="CHEBI:30616"/>
        <note>ligand shared between two neighboring subunits</note>
    </ligand>
</feature>
<feature type="binding site" evidence="1">
    <location>
        <position position="267"/>
    </location>
    <ligand>
        <name>ATP</name>
        <dbReference type="ChEBI" id="CHEBI:30616"/>
        <note>ligand shared between two neighboring subunits</note>
    </ligand>
</feature>
<feature type="binding site" description="in other chain" evidence="1">
    <location>
        <position position="271"/>
    </location>
    <ligand>
        <name>L-methionine</name>
        <dbReference type="ChEBI" id="CHEBI:57844"/>
        <note>ligand shared between two neighboring subunits</note>
    </ligand>
</feature>
<comment type="function">
    <text evidence="1">Catalyzes the formation of S-adenosylmethionine (AdoMet) from methionine and ATP. The overall synthetic reaction is composed of two sequential steps, AdoMet formation and the subsequent tripolyphosphate hydrolysis which occurs prior to release of AdoMet from the enzyme.</text>
</comment>
<comment type="catalytic activity">
    <reaction evidence="1">
        <text>L-methionine + ATP + H2O = S-adenosyl-L-methionine + phosphate + diphosphate</text>
        <dbReference type="Rhea" id="RHEA:21080"/>
        <dbReference type="ChEBI" id="CHEBI:15377"/>
        <dbReference type="ChEBI" id="CHEBI:30616"/>
        <dbReference type="ChEBI" id="CHEBI:33019"/>
        <dbReference type="ChEBI" id="CHEBI:43474"/>
        <dbReference type="ChEBI" id="CHEBI:57844"/>
        <dbReference type="ChEBI" id="CHEBI:59789"/>
        <dbReference type="EC" id="2.5.1.6"/>
    </reaction>
</comment>
<comment type="cofactor">
    <cofactor evidence="1">
        <name>Mg(2+)</name>
        <dbReference type="ChEBI" id="CHEBI:18420"/>
    </cofactor>
    <text evidence="1">Binds 2 divalent ions per subunit.</text>
</comment>
<comment type="cofactor">
    <cofactor evidence="1">
        <name>K(+)</name>
        <dbReference type="ChEBI" id="CHEBI:29103"/>
    </cofactor>
    <text evidence="1">Binds 1 potassium ion per subunit.</text>
</comment>
<comment type="pathway">
    <text evidence="1">Amino-acid biosynthesis; S-adenosyl-L-methionine biosynthesis; S-adenosyl-L-methionine from L-methionine: step 1/1.</text>
</comment>
<comment type="subunit">
    <text evidence="1">Homotetramer; dimer of dimers.</text>
</comment>
<comment type="subcellular location">
    <subcellularLocation>
        <location evidence="1">Cytoplasm</location>
    </subcellularLocation>
</comment>
<comment type="similarity">
    <text evidence="1">Belongs to the AdoMet synthase family.</text>
</comment>
<protein>
    <recommendedName>
        <fullName evidence="1">S-adenosylmethionine synthase</fullName>
        <shortName evidence="1">AdoMet synthase</shortName>
        <ecNumber evidence="1">2.5.1.6</ecNumber>
    </recommendedName>
    <alternativeName>
        <fullName evidence="1">MAT</fullName>
    </alternativeName>
    <alternativeName>
        <fullName evidence="1">Methionine adenosyltransferase</fullName>
    </alternativeName>
</protein>
<keyword id="KW-0067">ATP-binding</keyword>
<keyword id="KW-0963">Cytoplasm</keyword>
<keyword id="KW-0460">Magnesium</keyword>
<keyword id="KW-0479">Metal-binding</keyword>
<keyword id="KW-0547">Nucleotide-binding</keyword>
<keyword id="KW-0554">One-carbon metabolism</keyword>
<keyword id="KW-0630">Potassium</keyword>
<keyword id="KW-0808">Transferase</keyword>
<reference key="1">
    <citation type="journal article" date="2005" name="Proc. Natl. Acad. Sci. U.S.A.">
        <title>Comparison of the complete genome sequences of Pseudomonas syringae pv. syringae B728a and pv. tomato DC3000.</title>
        <authorList>
            <person name="Feil H."/>
            <person name="Feil W.S."/>
            <person name="Chain P."/>
            <person name="Larimer F."/>
            <person name="Dibartolo G."/>
            <person name="Copeland A."/>
            <person name="Lykidis A."/>
            <person name="Trong S."/>
            <person name="Nolan M."/>
            <person name="Goltsman E."/>
            <person name="Thiel J."/>
            <person name="Malfatti S."/>
            <person name="Loper J.E."/>
            <person name="Lapidus A."/>
            <person name="Detter J.C."/>
            <person name="Land M."/>
            <person name="Richardson P.M."/>
            <person name="Kyrpides N.C."/>
            <person name="Ivanova N."/>
            <person name="Lindow S.E."/>
        </authorList>
    </citation>
    <scope>NUCLEOTIDE SEQUENCE [LARGE SCALE GENOMIC DNA]</scope>
    <source>
        <strain>B728a</strain>
    </source>
</reference>
<evidence type="ECO:0000255" key="1">
    <source>
        <dbReference type="HAMAP-Rule" id="MF_00086"/>
    </source>
</evidence>
<organism>
    <name type="scientific">Pseudomonas syringae pv. syringae (strain B728a)</name>
    <dbReference type="NCBI Taxonomy" id="205918"/>
    <lineage>
        <taxon>Bacteria</taxon>
        <taxon>Pseudomonadati</taxon>
        <taxon>Pseudomonadota</taxon>
        <taxon>Gammaproteobacteria</taxon>
        <taxon>Pseudomonadales</taxon>
        <taxon>Pseudomonadaceae</taxon>
        <taxon>Pseudomonas</taxon>
        <taxon>Pseudomonas syringae</taxon>
    </lineage>
</organism>
<proteinExistence type="inferred from homology"/>
<name>METK_PSEU2</name>
<dbReference type="EC" id="2.5.1.6" evidence="1"/>
<dbReference type="EMBL" id="CP000075">
    <property type="protein sequence ID" value="AAY39821.1"/>
    <property type="molecule type" value="Genomic_DNA"/>
</dbReference>
<dbReference type="RefSeq" id="WP_003372639.1">
    <property type="nucleotide sequence ID" value="NC_007005.1"/>
</dbReference>
<dbReference type="RefSeq" id="YP_237859.1">
    <property type="nucleotide sequence ID" value="NC_007005.1"/>
</dbReference>
<dbReference type="SMR" id="Q4ZM01"/>
<dbReference type="STRING" id="205918.Psyr_4794"/>
<dbReference type="GeneID" id="65077211"/>
<dbReference type="KEGG" id="psb:Psyr_4794"/>
<dbReference type="PATRIC" id="fig|205918.7.peg.4950"/>
<dbReference type="eggNOG" id="COG0192">
    <property type="taxonomic scope" value="Bacteria"/>
</dbReference>
<dbReference type="HOGENOM" id="CLU_041802_1_1_6"/>
<dbReference type="OrthoDB" id="9801686at2"/>
<dbReference type="UniPathway" id="UPA00315">
    <property type="reaction ID" value="UER00080"/>
</dbReference>
<dbReference type="Proteomes" id="UP000000426">
    <property type="component" value="Chromosome"/>
</dbReference>
<dbReference type="GO" id="GO:0005737">
    <property type="term" value="C:cytoplasm"/>
    <property type="evidence" value="ECO:0007669"/>
    <property type="project" value="UniProtKB-SubCell"/>
</dbReference>
<dbReference type="GO" id="GO:0005524">
    <property type="term" value="F:ATP binding"/>
    <property type="evidence" value="ECO:0007669"/>
    <property type="project" value="UniProtKB-UniRule"/>
</dbReference>
<dbReference type="GO" id="GO:0000287">
    <property type="term" value="F:magnesium ion binding"/>
    <property type="evidence" value="ECO:0007669"/>
    <property type="project" value="UniProtKB-UniRule"/>
</dbReference>
<dbReference type="GO" id="GO:0004478">
    <property type="term" value="F:methionine adenosyltransferase activity"/>
    <property type="evidence" value="ECO:0007669"/>
    <property type="project" value="UniProtKB-UniRule"/>
</dbReference>
<dbReference type="GO" id="GO:0006730">
    <property type="term" value="P:one-carbon metabolic process"/>
    <property type="evidence" value="ECO:0007669"/>
    <property type="project" value="UniProtKB-KW"/>
</dbReference>
<dbReference type="GO" id="GO:0006556">
    <property type="term" value="P:S-adenosylmethionine biosynthetic process"/>
    <property type="evidence" value="ECO:0007669"/>
    <property type="project" value="UniProtKB-UniRule"/>
</dbReference>
<dbReference type="CDD" id="cd18079">
    <property type="entry name" value="S-AdoMet_synt"/>
    <property type="match status" value="1"/>
</dbReference>
<dbReference type="FunFam" id="3.30.300.10:FF:000003">
    <property type="entry name" value="S-adenosylmethionine synthase"/>
    <property type="match status" value="1"/>
</dbReference>
<dbReference type="Gene3D" id="3.30.300.10">
    <property type="match status" value="3"/>
</dbReference>
<dbReference type="HAMAP" id="MF_00086">
    <property type="entry name" value="S_AdoMet_synth1"/>
    <property type="match status" value="1"/>
</dbReference>
<dbReference type="InterPro" id="IPR022631">
    <property type="entry name" value="ADOMET_SYNTHASE_CS"/>
</dbReference>
<dbReference type="InterPro" id="IPR022630">
    <property type="entry name" value="S-AdoMet_synt_C"/>
</dbReference>
<dbReference type="InterPro" id="IPR022629">
    <property type="entry name" value="S-AdoMet_synt_central"/>
</dbReference>
<dbReference type="InterPro" id="IPR022628">
    <property type="entry name" value="S-AdoMet_synt_N"/>
</dbReference>
<dbReference type="InterPro" id="IPR002133">
    <property type="entry name" value="S-AdoMet_synthetase"/>
</dbReference>
<dbReference type="InterPro" id="IPR022636">
    <property type="entry name" value="S-AdoMet_synthetase_sfam"/>
</dbReference>
<dbReference type="NCBIfam" id="TIGR01034">
    <property type="entry name" value="metK"/>
    <property type="match status" value="1"/>
</dbReference>
<dbReference type="PANTHER" id="PTHR11964">
    <property type="entry name" value="S-ADENOSYLMETHIONINE SYNTHETASE"/>
    <property type="match status" value="1"/>
</dbReference>
<dbReference type="Pfam" id="PF02773">
    <property type="entry name" value="S-AdoMet_synt_C"/>
    <property type="match status" value="1"/>
</dbReference>
<dbReference type="Pfam" id="PF02772">
    <property type="entry name" value="S-AdoMet_synt_M"/>
    <property type="match status" value="1"/>
</dbReference>
<dbReference type="Pfam" id="PF00438">
    <property type="entry name" value="S-AdoMet_synt_N"/>
    <property type="match status" value="1"/>
</dbReference>
<dbReference type="PIRSF" id="PIRSF000497">
    <property type="entry name" value="MAT"/>
    <property type="match status" value="1"/>
</dbReference>
<dbReference type="SUPFAM" id="SSF55973">
    <property type="entry name" value="S-adenosylmethionine synthetase"/>
    <property type="match status" value="3"/>
</dbReference>
<dbReference type="PROSITE" id="PS00376">
    <property type="entry name" value="ADOMET_SYNTHASE_1"/>
    <property type="match status" value="1"/>
</dbReference>
<dbReference type="PROSITE" id="PS00377">
    <property type="entry name" value="ADOMET_SYNTHASE_2"/>
    <property type="match status" value="1"/>
</dbReference>
<accession>Q4ZM01</accession>
<gene>
    <name evidence="1" type="primary">metK</name>
    <name type="ordered locus">Psyr_4794</name>
</gene>